<protein>
    <recommendedName>
        <fullName evidence="6">Nicotinamide/nicotinic acid mononucleotide adenylyltransferase 1</fullName>
        <shortName>NMN/NaMN adenylyltransferase 1</shortName>
        <ecNumber evidence="3">2.7.7.1</ecNumber>
        <ecNumber evidence="3">2.7.7.18</ecNumber>
    </recommendedName>
    <alternativeName>
        <fullName>Nicotinamide mononucleotide adenylyltransferase 1</fullName>
        <shortName>NMN adenylyltransferase 1</shortName>
    </alternativeName>
    <alternativeName>
        <fullName>Nicotinate-nucleotide adenylyltransferase 1</fullName>
        <shortName>NaMN adenylyltransferase 1</shortName>
    </alternativeName>
</protein>
<keyword id="KW-0067">ATP-binding</keyword>
<keyword id="KW-0460">Magnesium</keyword>
<keyword id="KW-0520">NAD</keyword>
<keyword id="KW-0547">Nucleotide-binding</keyword>
<keyword id="KW-0548">Nucleotidyltransferase</keyword>
<keyword id="KW-0539">Nucleus</keyword>
<keyword id="KW-0597">Phosphoprotein</keyword>
<keyword id="KW-0662">Pyridine nucleotide biosynthesis</keyword>
<keyword id="KW-1185">Reference proteome</keyword>
<keyword id="KW-0808">Transferase</keyword>
<keyword id="KW-0862">Zinc</keyword>
<gene>
    <name type="primary">NMNAT1</name>
</gene>
<comment type="function">
    <text evidence="2 3">Catalyzes the formation of NAD(+) from nicotinamide mononucleotide (NMN) and ATP (By similarity). Can also use the deamidated form; nicotinic acid mononucleotide (NaMN) as substrate with the same efficiency (By similarity). Can use triazofurin monophosphate (TrMP) as substrate (By similarity). Also catalyzes the reverse reaction, i.e. the pyrophosphorolytic cleavage of NAD(+) (By similarity). For the pyrophosphorolytic activity, prefers NAD(+) and NaAD as substrates and degrades NADH, nicotinic acid adenine dinucleotide phosphate (NHD) and nicotinamide guanine dinucleotide (NGD) less effectively (By similarity). Involved in the synthesis of ATP in the nucleus, together with PARP1, PARG and NUDT5 (By similarity). Nuclear ATP generation is required for extensive chromatin remodeling events that are energy-consuming (By similarity). Fails to cleave phosphorylated dinucleotides NADP(+), NADPH and NaADP(+) (By similarity). Also acts as a cofactor for glutamate and aspartate ADP-ribosylation by directing PARP1 catalytic activity to glutamate and aspartate residues on histones. Protects against axonal degeneration following mechanical or toxic insults. Delays axonal degeneration after axotomy. Results in a &gt;10-fold increase in intact neurites 72 hours after injury (By similarity). Neural protection does not correlate with cellular NAD(+) levels but may still require enzyme activity (By similarity).</text>
</comment>
<comment type="catalytic activity">
    <reaction evidence="3">
        <text>beta-nicotinamide D-ribonucleotide + ATP + H(+) = diphosphate + NAD(+)</text>
        <dbReference type="Rhea" id="RHEA:21360"/>
        <dbReference type="ChEBI" id="CHEBI:14649"/>
        <dbReference type="ChEBI" id="CHEBI:15378"/>
        <dbReference type="ChEBI" id="CHEBI:30616"/>
        <dbReference type="ChEBI" id="CHEBI:33019"/>
        <dbReference type="ChEBI" id="CHEBI:57540"/>
        <dbReference type="EC" id="2.7.7.1"/>
    </reaction>
    <physiologicalReaction direction="left-to-right" evidence="3">
        <dbReference type="Rhea" id="RHEA:21361"/>
    </physiologicalReaction>
    <physiologicalReaction direction="right-to-left" evidence="3">
        <dbReference type="Rhea" id="RHEA:21362"/>
    </physiologicalReaction>
</comment>
<comment type="catalytic activity">
    <reaction evidence="3">
        <text>nicotinate beta-D-ribonucleotide + ATP + H(+) = deamido-NAD(+) + diphosphate</text>
        <dbReference type="Rhea" id="RHEA:22860"/>
        <dbReference type="ChEBI" id="CHEBI:15378"/>
        <dbReference type="ChEBI" id="CHEBI:30616"/>
        <dbReference type="ChEBI" id="CHEBI:33019"/>
        <dbReference type="ChEBI" id="CHEBI:57502"/>
        <dbReference type="ChEBI" id="CHEBI:58437"/>
        <dbReference type="EC" id="2.7.7.18"/>
    </reaction>
    <physiologicalReaction direction="left-to-right" evidence="3">
        <dbReference type="Rhea" id="RHEA:22861"/>
    </physiologicalReaction>
    <physiologicalReaction direction="right-to-left" evidence="3">
        <dbReference type="Rhea" id="RHEA:22862"/>
    </physiologicalReaction>
</comment>
<comment type="cofactor">
    <cofactor evidence="3">
        <name>Zn(2+)</name>
        <dbReference type="ChEBI" id="CHEBI:29105"/>
    </cofactor>
    <cofactor evidence="3">
        <name>Mg(2+)</name>
        <dbReference type="ChEBI" id="CHEBI:18420"/>
    </cofactor>
    <text evidence="3">Divalent metal cations. Zn(2+) confers higher activity as compared to Mg(2+).</text>
</comment>
<comment type="activity regulation">
    <text evidence="3">Activity is strongly inhibited by galotannin. Inhibited by P1-(adenosine-5')-P4-(nicotinic-acid-riboside-5')-tetraphosphate (Nap4AD).</text>
</comment>
<comment type="pathway">
    <text>Cofactor biosynthesis; NAD(+) biosynthesis; NAD(+) from nicotinamide D-ribonucleotide: step 1/1.</text>
</comment>
<comment type="pathway">
    <text>Cofactor biosynthesis; NAD(+) biosynthesis; deamido-NAD(+) from nicotinate D-ribonucleotide: step 1/1.</text>
</comment>
<comment type="subunit">
    <text evidence="3">Homohexamer. Interacts with ADPRT/PARP1.</text>
</comment>
<comment type="subcellular location">
    <subcellularLocation>
        <location evidence="3">Nucleus</location>
    </subcellularLocation>
</comment>
<comment type="similarity">
    <text evidence="6">Belongs to the eukaryotic NMN adenylyltransferase family.</text>
</comment>
<accession>Q0VD50</accession>
<reference key="1">
    <citation type="submission" date="2006-08" db="EMBL/GenBank/DDBJ databases">
        <authorList>
            <consortium name="NIH - Mammalian Gene Collection (MGC) project"/>
        </authorList>
    </citation>
    <scope>NUCLEOTIDE SEQUENCE [LARGE SCALE MRNA]</scope>
    <source>
        <strain>Hereford</strain>
        <tissue>Ascending colon</tissue>
    </source>
</reference>
<name>NMNA1_BOVIN</name>
<proteinExistence type="evidence at transcript level"/>
<dbReference type="EC" id="2.7.7.1" evidence="3"/>
<dbReference type="EC" id="2.7.7.18" evidence="3"/>
<dbReference type="EMBL" id="BC119834">
    <property type="protein sequence ID" value="AAI19835.1"/>
    <property type="molecule type" value="mRNA"/>
</dbReference>
<dbReference type="RefSeq" id="NP_001069302.1">
    <property type="nucleotide sequence ID" value="NM_001075834.1"/>
</dbReference>
<dbReference type="RefSeq" id="XP_024832008.1">
    <property type="nucleotide sequence ID" value="XM_024976240.2"/>
</dbReference>
<dbReference type="RefSeq" id="XP_024832009.1">
    <property type="nucleotide sequence ID" value="XM_024976241.2"/>
</dbReference>
<dbReference type="RefSeq" id="XP_024832010.1">
    <property type="nucleotide sequence ID" value="XM_024976242.2"/>
</dbReference>
<dbReference type="RefSeq" id="XP_024832011.1">
    <property type="nucleotide sequence ID" value="XM_024976243.2"/>
</dbReference>
<dbReference type="RefSeq" id="XP_024832012.1">
    <property type="nucleotide sequence ID" value="XM_024976244.2"/>
</dbReference>
<dbReference type="RefSeq" id="XP_059731386.1">
    <property type="nucleotide sequence ID" value="XM_059875403.1"/>
</dbReference>
<dbReference type="RefSeq" id="XP_059731387.1">
    <property type="nucleotide sequence ID" value="XM_059875404.1"/>
</dbReference>
<dbReference type="SMR" id="Q0VD50"/>
<dbReference type="FunCoup" id="Q0VD50">
    <property type="interactions" value="2407"/>
</dbReference>
<dbReference type="STRING" id="9913.ENSBTAP00000059876"/>
<dbReference type="PaxDb" id="9913-ENSBTAP00000048652"/>
<dbReference type="Ensembl" id="ENSBTAT00000082151.1">
    <property type="protein sequence ID" value="ENSBTAP00000059876.1"/>
    <property type="gene ID" value="ENSBTAG00000051897.1"/>
</dbReference>
<dbReference type="GeneID" id="522863"/>
<dbReference type="KEGG" id="bta:522863"/>
<dbReference type="CTD" id="64802"/>
<dbReference type="VEuPathDB" id="HostDB:ENSBTAG00000051897"/>
<dbReference type="VGNC" id="VGNC:32132">
    <property type="gene designation" value="NMNAT1"/>
</dbReference>
<dbReference type="eggNOG" id="KOG3199">
    <property type="taxonomic scope" value="Eukaryota"/>
</dbReference>
<dbReference type="GeneTree" id="ENSGT00950000183179"/>
<dbReference type="HOGENOM" id="CLU_033366_3_0_1"/>
<dbReference type="InParanoid" id="Q0VD50"/>
<dbReference type="OMA" id="HFDYELN"/>
<dbReference type="OrthoDB" id="422187at2759"/>
<dbReference type="TreeFam" id="TF315035"/>
<dbReference type="Reactome" id="R-BTA-196807">
    <property type="pathway name" value="Nicotinate metabolism"/>
</dbReference>
<dbReference type="UniPathway" id="UPA00253">
    <property type="reaction ID" value="UER00332"/>
</dbReference>
<dbReference type="UniPathway" id="UPA00253">
    <property type="reaction ID" value="UER00600"/>
</dbReference>
<dbReference type="Proteomes" id="UP000009136">
    <property type="component" value="Chromosome 16"/>
</dbReference>
<dbReference type="Bgee" id="ENSBTAG00000051897">
    <property type="expression patterns" value="Expressed in longissimus thoracis muscle and 104 other cell types or tissues"/>
</dbReference>
<dbReference type="GO" id="GO:0000785">
    <property type="term" value="C:chromatin"/>
    <property type="evidence" value="ECO:0007669"/>
    <property type="project" value="Ensembl"/>
</dbReference>
<dbReference type="GO" id="GO:0016604">
    <property type="term" value="C:nuclear body"/>
    <property type="evidence" value="ECO:0007669"/>
    <property type="project" value="Ensembl"/>
</dbReference>
<dbReference type="GO" id="GO:0005634">
    <property type="term" value="C:nucleus"/>
    <property type="evidence" value="ECO:0000318"/>
    <property type="project" value="GO_Central"/>
</dbReference>
<dbReference type="GO" id="GO:0005524">
    <property type="term" value="F:ATP binding"/>
    <property type="evidence" value="ECO:0007669"/>
    <property type="project" value="UniProtKB-KW"/>
</dbReference>
<dbReference type="GO" id="GO:0042802">
    <property type="term" value="F:identical protein binding"/>
    <property type="evidence" value="ECO:0007669"/>
    <property type="project" value="Ensembl"/>
</dbReference>
<dbReference type="GO" id="GO:0000309">
    <property type="term" value="F:nicotinamide-nucleotide adenylyltransferase activity"/>
    <property type="evidence" value="ECO:0000318"/>
    <property type="project" value="GO_Central"/>
</dbReference>
<dbReference type="GO" id="GO:0004515">
    <property type="term" value="F:nicotinate-nucleotide adenylyltransferase activity"/>
    <property type="evidence" value="ECO:0000318"/>
    <property type="project" value="GO_Central"/>
</dbReference>
<dbReference type="GO" id="GO:0140768">
    <property type="term" value="F:protein ADP-ribosyltransferase-substrate adaptor activity"/>
    <property type="evidence" value="ECO:0007669"/>
    <property type="project" value="Ensembl"/>
</dbReference>
<dbReference type="GO" id="GO:1990966">
    <property type="term" value="P:ATP generation from poly-ADP-D-ribose"/>
    <property type="evidence" value="ECO:0000250"/>
    <property type="project" value="UniProtKB"/>
</dbReference>
<dbReference type="GO" id="GO:0009435">
    <property type="term" value="P:NAD biosynthetic process"/>
    <property type="evidence" value="ECO:0000318"/>
    <property type="project" value="GO_Central"/>
</dbReference>
<dbReference type="GO" id="GO:0045892">
    <property type="term" value="P:negative regulation of DNA-templated transcription"/>
    <property type="evidence" value="ECO:0007669"/>
    <property type="project" value="Ensembl"/>
</dbReference>
<dbReference type="GO" id="GO:1990535">
    <property type="term" value="P:neuron projection maintenance"/>
    <property type="evidence" value="ECO:0007669"/>
    <property type="project" value="Ensembl"/>
</dbReference>
<dbReference type="GO" id="GO:0009611">
    <property type="term" value="P:response to wounding"/>
    <property type="evidence" value="ECO:0007669"/>
    <property type="project" value="Ensembl"/>
</dbReference>
<dbReference type="CDD" id="cd09286">
    <property type="entry name" value="NMNAT_Eukarya"/>
    <property type="match status" value="1"/>
</dbReference>
<dbReference type="FunFam" id="3.40.50.620:FF:000101">
    <property type="entry name" value="Nicotinamide-nucleotide adenylyltransferase"/>
    <property type="match status" value="1"/>
</dbReference>
<dbReference type="Gene3D" id="3.40.50.620">
    <property type="entry name" value="HUPs"/>
    <property type="match status" value="1"/>
</dbReference>
<dbReference type="InterPro" id="IPR004821">
    <property type="entry name" value="Cyt_trans-like"/>
</dbReference>
<dbReference type="InterPro" id="IPR051182">
    <property type="entry name" value="Euk_NMN_adenylyltrnsfrase"/>
</dbReference>
<dbReference type="InterPro" id="IPR005248">
    <property type="entry name" value="NadD/NMNAT"/>
</dbReference>
<dbReference type="InterPro" id="IPR045094">
    <property type="entry name" value="NMNAT_euk"/>
</dbReference>
<dbReference type="InterPro" id="IPR014729">
    <property type="entry name" value="Rossmann-like_a/b/a_fold"/>
</dbReference>
<dbReference type="NCBIfam" id="TIGR00482">
    <property type="entry name" value="nicotinate (nicotinamide) nucleotide adenylyltransferase"/>
    <property type="match status" value="1"/>
</dbReference>
<dbReference type="PANTHER" id="PTHR12039">
    <property type="entry name" value="NICOTINAMIDE MONONUCLEOTIDE ADENYLYLTRANSFERASE"/>
    <property type="match status" value="1"/>
</dbReference>
<dbReference type="PANTHER" id="PTHR12039:SF21">
    <property type="entry name" value="NICOTINAMIDE_NICOTINIC ACID MONONUCLEOTIDE ADENYLYLTRANSFERASE 1"/>
    <property type="match status" value="1"/>
</dbReference>
<dbReference type="Pfam" id="PF01467">
    <property type="entry name" value="CTP_transf_like"/>
    <property type="match status" value="1"/>
</dbReference>
<dbReference type="SUPFAM" id="SSF52374">
    <property type="entry name" value="Nucleotidylyl transferase"/>
    <property type="match status" value="1"/>
</dbReference>
<evidence type="ECO:0000250" key="1">
    <source>
        <dbReference type="UniProtKB" id="Q96T66"/>
    </source>
</evidence>
<evidence type="ECO:0000250" key="2">
    <source>
        <dbReference type="UniProtKB" id="Q9EPA7"/>
    </source>
</evidence>
<evidence type="ECO:0000250" key="3">
    <source>
        <dbReference type="UniProtKB" id="Q9HAN9"/>
    </source>
</evidence>
<evidence type="ECO:0000255" key="4"/>
<evidence type="ECO:0000256" key="5">
    <source>
        <dbReference type="SAM" id="MobiDB-lite"/>
    </source>
</evidence>
<evidence type="ECO:0000305" key="6"/>
<feature type="chain" id="PRO_0000262882" description="Nicotinamide/nicotinic acid mononucleotide adenylyltransferase 1">
    <location>
        <begin position="1"/>
        <end position="281"/>
    </location>
</feature>
<feature type="region of interest" description="Disordered" evidence="5">
    <location>
        <begin position="113"/>
        <end position="143"/>
    </location>
</feature>
<feature type="short sequence motif" description="Nuclear localization signal" evidence="4">
    <location>
        <begin position="123"/>
        <end position="129"/>
    </location>
</feature>
<feature type="compositionally biased region" description="Basic and acidic residues" evidence="5">
    <location>
        <begin position="129"/>
        <end position="143"/>
    </location>
</feature>
<feature type="binding site" evidence="1 3">
    <location>
        <begin position="15"/>
        <end position="17"/>
    </location>
    <ligand>
        <name>ATP</name>
        <dbReference type="ChEBI" id="CHEBI:30616"/>
    </ligand>
</feature>
<feature type="binding site" evidence="3">
    <location>
        <position position="15"/>
    </location>
    <ligand>
        <name>beta-nicotinamide D-ribonucleotide</name>
        <dbReference type="ChEBI" id="CHEBI:14649"/>
    </ligand>
</feature>
<feature type="binding site" evidence="3">
    <location>
        <position position="15"/>
    </location>
    <ligand>
        <name>NAD(+)</name>
        <dbReference type="ChEBI" id="CHEBI:57540"/>
    </ligand>
</feature>
<feature type="binding site" evidence="3">
    <location>
        <position position="16"/>
    </location>
    <ligand>
        <name>beta-nicotinamide D-ribonucleotide</name>
        <dbReference type="ChEBI" id="CHEBI:14649"/>
    </ligand>
</feature>
<feature type="binding site" evidence="3">
    <location>
        <position position="16"/>
    </location>
    <ligand>
        <name>NAD(+)</name>
        <dbReference type="ChEBI" id="CHEBI:57540"/>
    </ligand>
</feature>
<feature type="binding site" evidence="3">
    <location>
        <position position="17"/>
    </location>
    <ligand>
        <name>NAD(+)</name>
        <dbReference type="ChEBI" id="CHEBI:57540"/>
    </ligand>
</feature>
<feature type="binding site" evidence="3">
    <location>
        <position position="23"/>
    </location>
    <ligand>
        <name>NAD(+)</name>
        <dbReference type="ChEBI" id="CHEBI:57540"/>
    </ligand>
</feature>
<feature type="binding site" evidence="1">
    <location>
        <position position="24"/>
    </location>
    <ligand>
        <name>ATP</name>
        <dbReference type="ChEBI" id="CHEBI:30616"/>
    </ligand>
</feature>
<feature type="binding site" evidence="3">
    <location>
        <position position="55"/>
    </location>
    <ligand>
        <name>beta-nicotinamide D-ribonucleotide</name>
        <dbReference type="ChEBI" id="CHEBI:14649"/>
    </ligand>
</feature>
<feature type="binding site" evidence="3">
    <location>
        <position position="57"/>
    </location>
    <ligand>
        <name>beta-nicotinamide D-ribonucleotide</name>
        <dbReference type="ChEBI" id="CHEBI:14649"/>
    </ligand>
</feature>
<feature type="binding site" evidence="3">
    <location>
        <position position="57"/>
    </location>
    <ligand>
        <name>NAD(+)</name>
        <dbReference type="ChEBI" id="CHEBI:57540"/>
    </ligand>
</feature>
<feature type="binding site" evidence="1">
    <location>
        <position position="58"/>
    </location>
    <ligand>
        <name>ATP</name>
        <dbReference type="ChEBI" id="CHEBI:30616"/>
    </ligand>
</feature>
<feature type="binding site" evidence="3">
    <location>
        <position position="92"/>
    </location>
    <ligand>
        <name>beta-nicotinamide D-ribonucleotide</name>
        <dbReference type="ChEBI" id="CHEBI:14649"/>
    </ligand>
</feature>
<feature type="binding site" evidence="3">
    <location>
        <position position="92"/>
    </location>
    <ligand>
        <name>NAD(+)</name>
        <dbReference type="ChEBI" id="CHEBI:57540"/>
    </ligand>
</feature>
<feature type="binding site" evidence="3">
    <location>
        <position position="95"/>
    </location>
    <ligand>
        <name>beta-nicotinamide D-ribonucleotide</name>
        <dbReference type="ChEBI" id="CHEBI:14649"/>
    </ligand>
</feature>
<feature type="binding site" evidence="3">
    <location>
        <position position="95"/>
    </location>
    <ligand>
        <name>NAD(+)</name>
        <dbReference type="ChEBI" id="CHEBI:57540"/>
    </ligand>
</feature>
<feature type="binding site" evidence="1">
    <location>
        <begin position="158"/>
        <end position="160"/>
    </location>
    <ligand>
        <name>ATP</name>
        <dbReference type="ChEBI" id="CHEBI:30616"/>
    </ligand>
</feature>
<feature type="binding site" evidence="3">
    <location>
        <position position="158"/>
    </location>
    <ligand>
        <name>NAD(+)</name>
        <dbReference type="ChEBI" id="CHEBI:57540"/>
    </ligand>
</feature>
<feature type="binding site" evidence="3">
    <location>
        <position position="160"/>
    </location>
    <ligand>
        <name>NAD(+)</name>
        <dbReference type="ChEBI" id="CHEBI:57540"/>
    </ligand>
</feature>
<feature type="binding site" evidence="3">
    <location>
        <position position="170"/>
    </location>
    <ligand>
        <name>beta-nicotinamide D-ribonucleotide</name>
        <dbReference type="ChEBI" id="CHEBI:14649"/>
    </ligand>
</feature>
<feature type="binding site" evidence="3">
    <location>
        <position position="170"/>
    </location>
    <ligand>
        <name>NAD(+)</name>
        <dbReference type="ChEBI" id="CHEBI:57540"/>
    </ligand>
</feature>
<feature type="binding site" evidence="3">
    <location>
        <position position="171"/>
    </location>
    <ligand>
        <name>beta-nicotinamide D-ribonucleotide</name>
        <dbReference type="ChEBI" id="CHEBI:14649"/>
    </ligand>
</feature>
<feature type="binding site" evidence="3">
    <location>
        <position position="171"/>
    </location>
    <ligand>
        <name>NAD(+)</name>
        <dbReference type="ChEBI" id="CHEBI:57540"/>
    </ligand>
</feature>
<feature type="binding site" evidence="3">
    <location>
        <position position="217"/>
    </location>
    <ligand>
        <name>NAD(+)</name>
        <dbReference type="ChEBI" id="CHEBI:57540"/>
    </ligand>
</feature>
<feature type="binding site" evidence="3">
    <location>
        <position position="221"/>
    </location>
    <ligand>
        <name>NAD(+)</name>
        <dbReference type="ChEBI" id="CHEBI:57540"/>
    </ligand>
</feature>
<feature type="binding site" evidence="1">
    <location>
        <begin position="226"/>
        <end position="229"/>
    </location>
    <ligand>
        <name>ATP</name>
        <dbReference type="ChEBI" id="CHEBI:30616"/>
    </ligand>
</feature>
<feature type="modified residue" description="Phosphoserine" evidence="3">
    <location>
        <position position="117"/>
    </location>
</feature>
<organism>
    <name type="scientific">Bos taurus</name>
    <name type="common">Bovine</name>
    <dbReference type="NCBI Taxonomy" id="9913"/>
    <lineage>
        <taxon>Eukaryota</taxon>
        <taxon>Metazoa</taxon>
        <taxon>Chordata</taxon>
        <taxon>Craniata</taxon>
        <taxon>Vertebrata</taxon>
        <taxon>Euteleostomi</taxon>
        <taxon>Mammalia</taxon>
        <taxon>Eutheria</taxon>
        <taxon>Laurasiatheria</taxon>
        <taxon>Artiodactyla</taxon>
        <taxon>Ruminantia</taxon>
        <taxon>Pecora</taxon>
        <taxon>Bovidae</taxon>
        <taxon>Bovinae</taxon>
        <taxon>Bos</taxon>
    </lineage>
</organism>
<sequence length="281" mass="32200">MENSEKTEVVLLACGSFNPITNMHLRLFELAKDYMNGTGKYKVIKGIISPVGDAYKKKGLISAYHRVIMAELATKNSKWVEVDTWESLQKEWTETAKVLRHHQEKLEASICDPQQNSPVLEKPGRKRKWAEQKQDISEKKSLEQTKTKGVPKVKLLCGADFLESFGVPNLWKSEDITKILGDYGLICITRAGNDAQKFIYESDVLWKHQNNIHLVNEWITNDISSTKIRRALRRGQSIRYLVPDLVEEYIEKHNLYSSESEERNVGVVLAPLQRNTTEVKA</sequence>